<feature type="chain" id="PRO_0000201681" description="Glyoxalase ElbB">
    <location>
        <begin position="1"/>
        <end position="217"/>
    </location>
</feature>
<feature type="active site" description="Nucleophile" evidence="1">
    <location>
        <position position="135"/>
    </location>
</feature>
<feature type="sequence conflict" description="In Ref. 1; BAA02487." evidence="6" ref="1">
    <original>C</original>
    <variation>S</variation>
    <location>
        <position position="111"/>
    </location>
</feature>
<feature type="sequence conflict" description="In Ref. 1; BAA02487." evidence="6" ref="1">
    <original>AQNIAEAASGIDKLVSRVLVLAE</original>
    <variation>RRTLQKRRAALISWFPACWFWLNE</variation>
    <location>
        <begin position="195"/>
        <end position="217"/>
    </location>
</feature>
<feature type="strand" evidence="9">
    <location>
        <begin position="3"/>
        <end position="7"/>
    </location>
</feature>
<feature type="strand" evidence="9">
    <location>
        <begin position="10"/>
        <end position="12"/>
    </location>
</feature>
<feature type="turn" evidence="9">
    <location>
        <begin position="13"/>
        <end position="15"/>
    </location>
</feature>
<feature type="helix" evidence="9">
    <location>
        <begin position="19"/>
        <end position="31"/>
    </location>
</feature>
<feature type="strand" evidence="9">
    <location>
        <begin position="35"/>
        <end position="40"/>
    </location>
</feature>
<feature type="strand" evidence="9">
    <location>
        <begin position="42"/>
        <end position="44"/>
    </location>
</feature>
<feature type="turn" evidence="9">
    <location>
        <begin position="51"/>
        <end position="53"/>
    </location>
</feature>
<feature type="helix" evidence="9">
    <location>
        <begin position="63"/>
        <end position="67"/>
    </location>
</feature>
<feature type="turn" evidence="9">
    <location>
        <begin position="68"/>
        <end position="73"/>
    </location>
</feature>
<feature type="helix" evidence="9">
    <location>
        <begin position="78"/>
        <end position="80"/>
    </location>
</feature>
<feature type="helix" evidence="9">
    <location>
        <begin position="83"/>
        <end position="85"/>
    </location>
</feature>
<feature type="strand" evidence="9">
    <location>
        <begin position="87"/>
        <end position="91"/>
    </location>
</feature>
<feature type="helix" evidence="9">
    <location>
        <begin position="96"/>
        <end position="99"/>
    </location>
</feature>
<feature type="helix" evidence="9">
    <location>
        <begin position="104"/>
        <end position="107"/>
    </location>
</feature>
<feature type="helix" evidence="9">
    <location>
        <begin position="108"/>
        <end position="110"/>
    </location>
</feature>
<feature type="helix" evidence="9">
    <location>
        <begin position="115"/>
        <end position="126"/>
    </location>
</feature>
<feature type="strand" evidence="9">
    <location>
        <begin position="131"/>
        <end position="134"/>
    </location>
</feature>
<feature type="helix" evidence="9">
    <location>
        <begin position="137"/>
        <end position="140"/>
    </location>
</feature>
<feature type="helix" evidence="9">
    <location>
        <begin position="141"/>
        <end position="144"/>
    </location>
</feature>
<feature type="helix" evidence="9">
    <location>
        <begin position="157"/>
        <end position="165"/>
    </location>
</feature>
<feature type="strand" evidence="9">
    <location>
        <begin position="179"/>
        <end position="181"/>
    </location>
</feature>
<feature type="turn" evidence="9">
    <location>
        <begin position="182"/>
        <end position="185"/>
    </location>
</feature>
<feature type="strand" evidence="9">
    <location>
        <begin position="186"/>
        <end position="189"/>
    </location>
</feature>
<feature type="helix" evidence="9">
    <location>
        <begin position="191"/>
        <end position="193"/>
    </location>
</feature>
<feature type="helix" evidence="9">
    <location>
        <begin position="198"/>
        <end position="216"/>
    </location>
</feature>
<sequence length="217" mass="22982">MKKIGVILSGCGVYDGSEIHEAVLTLLAISRSGAQAVCFAPDKQQVDVINHLTGEAMTETRNVLIEAARITRGEIRPLAQADAAELDALIVPGGFGAAKNLSNFASLGSECTVDRELKALAQAMHQAGKPLGFMCIAPAMLPKIFDFPLRLTIGTDIDTAEVLEEMGAEHVPCPVDDIVVDEDNKIVTTPAYMLAQNIAEAASGIDKLVSRVLVLAE</sequence>
<organism>
    <name type="scientific">Escherichia coli (strain K12)</name>
    <dbReference type="NCBI Taxonomy" id="83333"/>
    <lineage>
        <taxon>Bacteria</taxon>
        <taxon>Pseudomonadati</taxon>
        <taxon>Pseudomonadota</taxon>
        <taxon>Gammaproteobacteria</taxon>
        <taxon>Enterobacterales</taxon>
        <taxon>Enterobacteriaceae</taxon>
        <taxon>Escherichia</taxon>
    </lineage>
</organism>
<name>ELBB_ECOLI</name>
<keyword id="KW-0002">3D-structure</keyword>
<keyword id="KW-0903">Direct protein sequencing</keyword>
<keyword id="KW-0456">Lyase</keyword>
<keyword id="KW-1185">Reference proteome</keyword>
<evidence type="ECO:0000250" key="1">
    <source>
        <dbReference type="UniProtKB" id="P31658"/>
    </source>
</evidence>
<evidence type="ECO:0000269" key="2">
    <source>
    </source>
</evidence>
<evidence type="ECO:0000303" key="3">
    <source>
    </source>
</evidence>
<evidence type="ECO:0000303" key="4">
    <source>
    </source>
</evidence>
<evidence type="ECO:0000303" key="5">
    <source>
    </source>
</evidence>
<evidence type="ECO:0000305" key="6"/>
<evidence type="ECO:0000305" key="7">
    <source>
    </source>
</evidence>
<evidence type="ECO:0000305" key="8">
    <source ref="7"/>
</evidence>
<evidence type="ECO:0007829" key="9">
    <source>
        <dbReference type="PDB" id="1VHQ"/>
    </source>
</evidence>
<reference key="1">
    <citation type="submission" date="1993-12" db="EMBL/GenBank/DDBJ databases">
        <title>Sequence and characterisation of the gene encoding the sigma cross-reacting protein 27A in Escherichia coli.</title>
        <authorList>
            <person name="Smillie D.A."/>
            <person name="Fujita N."/>
            <person name="Townsley F.M."/>
            <person name="Ishihama A."/>
            <person name="Hayward R.S."/>
        </authorList>
    </citation>
    <scope>NUCLEOTIDE SEQUENCE [GENOMIC DNA]</scope>
    <source>
        <strain>K12 / W3110 / ATCC 27325 / DSM 5911</strain>
    </source>
</reference>
<reference key="2">
    <citation type="journal article" date="1997" name="Science">
        <title>The complete genome sequence of Escherichia coli K-12.</title>
        <authorList>
            <person name="Blattner F.R."/>
            <person name="Plunkett G. III"/>
            <person name="Bloch C.A."/>
            <person name="Perna N.T."/>
            <person name="Burland V."/>
            <person name="Riley M."/>
            <person name="Collado-Vides J."/>
            <person name="Glasner J.D."/>
            <person name="Rode C.K."/>
            <person name="Mayhew G.F."/>
            <person name="Gregor J."/>
            <person name="Davis N.W."/>
            <person name="Kirkpatrick H.A."/>
            <person name="Goeden M.A."/>
            <person name="Rose D.J."/>
            <person name="Mau B."/>
            <person name="Shao Y."/>
        </authorList>
    </citation>
    <scope>NUCLEOTIDE SEQUENCE [LARGE SCALE GENOMIC DNA]</scope>
    <source>
        <strain>K12 / MG1655 / ATCC 47076</strain>
    </source>
</reference>
<reference key="3">
    <citation type="journal article" date="2006" name="Mol. Syst. Biol.">
        <title>Highly accurate genome sequences of Escherichia coli K-12 strains MG1655 and W3110.</title>
        <authorList>
            <person name="Hayashi K."/>
            <person name="Morooka N."/>
            <person name="Yamamoto Y."/>
            <person name="Fujita K."/>
            <person name="Isono K."/>
            <person name="Choi S."/>
            <person name="Ohtsubo E."/>
            <person name="Baba T."/>
            <person name="Wanner B.L."/>
            <person name="Mori H."/>
            <person name="Horiuchi T."/>
        </authorList>
    </citation>
    <scope>NUCLEOTIDE SEQUENCE [LARGE SCALE GENOMIC DNA]</scope>
    <source>
        <strain>K12 / W3110 / ATCC 27325 / DSM 5911</strain>
    </source>
</reference>
<reference key="4">
    <citation type="journal article" date="1992" name="Biochem. Biophys. Res. Commun.">
        <title>Identification of Escherichia coli proteins cross-reacting with antibodies against region 2.2 peptide of RNA polymerase sigma subunit.</title>
        <authorList>
            <person name="Ueshima R."/>
            <person name="Fujita N."/>
            <person name="Ishihama A."/>
        </authorList>
    </citation>
    <scope>PROTEIN SEQUENCE OF 1-24</scope>
</reference>
<reference key="5">
    <citation type="journal article" date="1998" name="J. Biochem.">
        <title>Identification of genes affecting lycopene formation in Escherichia coli transformed with carotenoid biosynthetic genes: candidates for early genes in isoprenoid biosynthesis.</title>
        <authorList>
            <person name="Hemmi H."/>
            <person name="Ohnuma S."/>
            <person name="Nagaoka K."/>
            <person name="Nishino T."/>
        </authorList>
    </citation>
    <scope>POSSIBLE FUNCTION</scope>
</reference>
<reference key="6">
    <citation type="journal article" date="2016" name="FEMS Microbiol. Lett.">
        <title>Characterization of the Escherichia coli YajL, YhbO and ElbB glyoxalases.</title>
        <authorList>
            <person name="Lee C."/>
            <person name="Lee J."/>
            <person name="Lee J.Y."/>
            <person name="Park C."/>
        </authorList>
    </citation>
    <scope>FUNCTION AS A GLYOXALASE</scope>
    <scope>CATALYTIC ACTIVITY</scope>
    <scope>BIOPHYSICOCHEMICAL PROPERTIES</scope>
    <source>
        <strain>K12 / MG1655 / ATCC 47076</strain>
    </source>
</reference>
<reference key="7">
    <citation type="submission" date="2003-04" db="PDB data bank">
        <title>X-Ray structure Of ElbB from E. Coli. Northeast Structural Genomics Research Consortium (Nesg) Target Er105.</title>
        <authorList>
            <consortium name="Northeast structural genomics consortium (NESG)"/>
            <person name="Benach J."/>
            <person name="Edstrom W."/>
            <person name="Ma L.C."/>
            <person name="Xiao R."/>
            <person name="Acton T.B."/>
            <person name="Rost B."/>
            <person name="Montelione G.T."/>
            <person name="Hunt J.F."/>
        </authorList>
    </citation>
    <scope>X-RAY CRYSTALLOGRAPHY (2.95 ANGSTROMS)</scope>
    <scope>SUBUNIT</scope>
</reference>
<reference key="8">
    <citation type="journal article" date="2005" name="Proteins">
        <title>Structural analysis of a set of proteins resulting from a bacterial genomics project.</title>
        <authorList>
            <person name="Badger J."/>
            <person name="Sauder J.M."/>
            <person name="Adams J.M."/>
            <person name="Antonysamy S."/>
            <person name="Bain K."/>
            <person name="Bergseid M.G."/>
            <person name="Buchanan S.G."/>
            <person name="Buchanan M.D."/>
            <person name="Batiyenko Y."/>
            <person name="Christopher J.A."/>
            <person name="Emtage S."/>
            <person name="Eroshkina A."/>
            <person name="Feil I."/>
            <person name="Furlong E.B."/>
            <person name="Gajiwala K.S."/>
            <person name="Gao X."/>
            <person name="He D."/>
            <person name="Hendle J."/>
            <person name="Huber A."/>
            <person name="Hoda K."/>
            <person name="Kearins P."/>
            <person name="Kissinger C."/>
            <person name="Laubert B."/>
            <person name="Lewis H.A."/>
            <person name="Lin J."/>
            <person name="Loomis K."/>
            <person name="Lorimer D."/>
            <person name="Louie G."/>
            <person name="Maletic M."/>
            <person name="Marsh C.D."/>
            <person name="Miller I."/>
            <person name="Molinari J."/>
            <person name="Muller-Dieckmann H.J."/>
            <person name="Newman J.M."/>
            <person name="Noland B.W."/>
            <person name="Pagarigan B."/>
            <person name="Park F."/>
            <person name="Peat T.S."/>
            <person name="Post K.W."/>
            <person name="Radojicic S."/>
            <person name="Ramos A."/>
            <person name="Romero R."/>
            <person name="Rutter M.E."/>
            <person name="Sanderson W.E."/>
            <person name="Schwinn K.D."/>
            <person name="Tresser J."/>
            <person name="Winhoven J."/>
            <person name="Wright T.A."/>
            <person name="Wu L."/>
            <person name="Xu J."/>
            <person name="Harris T.J.R."/>
        </authorList>
    </citation>
    <scope>X-RAY CRYSTALLOGRAPHY (1.65 ANGSTROMS)</scope>
    <scope>SUBUNIT</scope>
</reference>
<accession>P0ABU5</accession>
<accession>P26428</accession>
<accession>P76673</accession>
<accession>Q2M903</accession>
<gene>
    <name evidence="4" type="primary">elbB</name>
    <name evidence="5" type="synonym">elb2</name>
    <name type="synonym">yzzB</name>
    <name type="ordered locus">b3209</name>
    <name type="ordered locus">JW3176</name>
</gene>
<dbReference type="EC" id="4.2.1.-" evidence="2"/>
<dbReference type="EMBL" id="D13188">
    <property type="protein sequence ID" value="BAA02487.1"/>
    <property type="molecule type" value="Genomic_DNA"/>
</dbReference>
<dbReference type="EMBL" id="U18997">
    <property type="protein sequence ID" value="AAA58011.1"/>
    <property type="status" value="ALT_INIT"/>
    <property type="molecule type" value="Genomic_DNA"/>
</dbReference>
<dbReference type="EMBL" id="U00096">
    <property type="protein sequence ID" value="AAC76241.2"/>
    <property type="molecule type" value="Genomic_DNA"/>
</dbReference>
<dbReference type="EMBL" id="AP009048">
    <property type="protein sequence ID" value="BAE77253.1"/>
    <property type="molecule type" value="Genomic_DNA"/>
</dbReference>
<dbReference type="PIR" id="C65112">
    <property type="entry name" value="C65112"/>
</dbReference>
<dbReference type="RefSeq" id="NP_417676.2">
    <property type="nucleotide sequence ID" value="NC_000913.3"/>
</dbReference>
<dbReference type="RefSeq" id="WP_001300411.1">
    <property type="nucleotide sequence ID" value="NZ_SSZK01000007.1"/>
</dbReference>
<dbReference type="PDB" id="1OY1">
    <property type="method" value="X-ray"/>
    <property type="resolution" value="2.95 A"/>
    <property type="chains" value="A/B/C/D=1-217"/>
</dbReference>
<dbReference type="PDB" id="1VHQ">
    <property type="method" value="X-ray"/>
    <property type="resolution" value="1.65 A"/>
    <property type="chains" value="A/B=1-217"/>
</dbReference>
<dbReference type="PDBsum" id="1OY1"/>
<dbReference type="PDBsum" id="1VHQ"/>
<dbReference type="SMR" id="P0ABU5"/>
<dbReference type="BioGRID" id="4262428">
    <property type="interactions" value="14"/>
</dbReference>
<dbReference type="BioGRID" id="852212">
    <property type="interactions" value="5"/>
</dbReference>
<dbReference type="DIP" id="DIP-48002N"/>
<dbReference type="FunCoup" id="P0ABU5">
    <property type="interactions" value="158"/>
</dbReference>
<dbReference type="IntAct" id="P0ABU5">
    <property type="interactions" value="6"/>
</dbReference>
<dbReference type="STRING" id="511145.b3209"/>
<dbReference type="MEROPS" id="C56.975"/>
<dbReference type="jPOST" id="P0ABU5"/>
<dbReference type="PaxDb" id="511145-b3209"/>
<dbReference type="EnsemblBacteria" id="AAC76241">
    <property type="protein sequence ID" value="AAC76241"/>
    <property type="gene ID" value="b3209"/>
</dbReference>
<dbReference type="GeneID" id="947903"/>
<dbReference type="KEGG" id="ecj:JW3176"/>
<dbReference type="KEGG" id="eco:b3209"/>
<dbReference type="KEGG" id="ecoc:C3026_17460"/>
<dbReference type="PATRIC" id="fig|1411691.4.peg.3522"/>
<dbReference type="EchoBASE" id="EB1356"/>
<dbReference type="eggNOG" id="COG3155">
    <property type="taxonomic scope" value="Bacteria"/>
</dbReference>
<dbReference type="HOGENOM" id="CLU_072952_1_0_6"/>
<dbReference type="InParanoid" id="P0ABU5"/>
<dbReference type="OMA" id="AQVQCFA"/>
<dbReference type="OrthoDB" id="5605062at2"/>
<dbReference type="PhylomeDB" id="P0ABU5"/>
<dbReference type="BioCyc" id="EcoCyc:EG11383-MONOMER"/>
<dbReference type="BioCyc" id="MetaCyc:EG11383-MONOMER"/>
<dbReference type="EvolutionaryTrace" id="P0ABU5"/>
<dbReference type="PRO" id="PR:P0ABU5"/>
<dbReference type="Proteomes" id="UP000000625">
    <property type="component" value="Chromosome"/>
</dbReference>
<dbReference type="GO" id="GO:0005829">
    <property type="term" value="C:cytosol"/>
    <property type="evidence" value="ECO:0000314"/>
    <property type="project" value="EcoCyc"/>
</dbReference>
<dbReference type="GO" id="GO:0016829">
    <property type="term" value="F:lyase activity"/>
    <property type="evidence" value="ECO:0007669"/>
    <property type="project" value="UniProtKB-KW"/>
</dbReference>
<dbReference type="GO" id="GO:0008299">
    <property type="term" value="P:isoprenoid biosynthetic process"/>
    <property type="evidence" value="ECO:0000315"/>
    <property type="project" value="EcoliWiki"/>
</dbReference>
<dbReference type="GO" id="GO:0045828">
    <property type="term" value="P:positive regulation of isoprenoid metabolic process"/>
    <property type="evidence" value="ECO:0000315"/>
    <property type="project" value="EcoliWiki"/>
</dbReference>
<dbReference type="CDD" id="cd03133">
    <property type="entry name" value="GATase1_ES1"/>
    <property type="match status" value="1"/>
</dbReference>
<dbReference type="FunFam" id="3.40.50.880:FF:000032">
    <property type="entry name" value="Glyoxalase"/>
    <property type="match status" value="1"/>
</dbReference>
<dbReference type="Gene3D" id="3.40.50.880">
    <property type="match status" value="1"/>
</dbReference>
<dbReference type="InterPro" id="IPR029062">
    <property type="entry name" value="Class_I_gatase-like"/>
</dbReference>
<dbReference type="InterPro" id="IPR026041">
    <property type="entry name" value="ElbB"/>
</dbReference>
<dbReference type="NCBIfam" id="NF008747">
    <property type="entry name" value="PRK11780.1"/>
    <property type="match status" value="1"/>
</dbReference>
<dbReference type="PANTHER" id="PTHR10224">
    <property type="entry name" value="ES1 PROTEIN HOMOLOG, MITOCHONDRIAL"/>
    <property type="match status" value="1"/>
</dbReference>
<dbReference type="PANTHER" id="PTHR10224:SF12">
    <property type="entry name" value="GLYOXALASE ELBB"/>
    <property type="match status" value="1"/>
</dbReference>
<dbReference type="PIRSF" id="PIRSF006320">
    <property type="entry name" value="Elb2"/>
    <property type="match status" value="1"/>
</dbReference>
<dbReference type="SUPFAM" id="SSF52317">
    <property type="entry name" value="Class I glutamine amidotransferase-like"/>
    <property type="match status" value="1"/>
</dbReference>
<proteinExistence type="evidence at protein level"/>
<comment type="function">
    <text evidence="2 6">Displays glyoxalase activity, catalyzing the conversion of glyoxal to glycolate (PubMed:26678554). However, this apparent glyoxalase activity may reflect a protein deglycase activity, which could be the primary function of this protein like other DJ-1 superfamily members such as PARK7, YajL, YhbO and HchA (Probable). Is not able to use methylglyoxal as substrate (PubMed:26678554).</text>
</comment>
<comment type="catalytic activity">
    <reaction evidence="2">
        <text>glyoxal + H2O = glycolate + H(+)</text>
        <dbReference type="Rhea" id="RHEA:51672"/>
        <dbReference type="ChEBI" id="CHEBI:15377"/>
        <dbReference type="ChEBI" id="CHEBI:15378"/>
        <dbReference type="ChEBI" id="CHEBI:29805"/>
        <dbReference type="ChEBI" id="CHEBI:34779"/>
    </reaction>
</comment>
<comment type="biophysicochemical properties">
    <kinetics>
        <KM evidence="2">1.21 mM for glyoxal (at pH 7.4 and 37 degrees Celsius)</KM>
        <text evidence="2">kcat is 0.48 min(-1) with glyoxal as substrate (at pH 7.4 and 37 degrees Celsius).</text>
    </kinetics>
</comment>
<comment type="subunit">
    <text evidence="7 8">Homodimer.</text>
</comment>
<comment type="similarity">
    <text evidence="6">Belongs to the peptidase C56 family.</text>
</comment>
<comment type="caution">
    <text evidence="6">Was originally thought (PubMed:9603997) to be involved in the early steps of isoprenoid biosynthesis.</text>
</comment>
<comment type="sequence caution" evidence="6">
    <conflict type="erroneous initiation">
        <sequence resource="EMBL-CDS" id="AAA58011"/>
    </conflict>
    <text>Extended N-terminus.</text>
</comment>
<protein>
    <recommendedName>
        <fullName evidence="4">Glyoxalase ElbB</fullName>
        <ecNumber evidence="2">4.2.1.-</ecNumber>
    </recommendedName>
    <alternativeName>
        <fullName evidence="3">Sigma cross-reacting protein 27A</fullName>
        <shortName evidence="3">SCRP-27A</shortName>
    </alternativeName>
</protein>